<proteinExistence type="evidence at transcript level"/>
<keyword id="KW-0325">Glycoprotein</keyword>
<keyword id="KW-0378">Hydrolase</keyword>
<keyword id="KW-0442">Lipid degradation</keyword>
<keyword id="KW-0443">Lipid metabolism</keyword>
<keyword id="KW-1185">Reference proteome</keyword>
<keyword id="KW-0677">Repeat</keyword>
<keyword id="KW-0732">Signal</keyword>
<name>PLDY_DICDI</name>
<sequence>MIINRLFIIIVLFFVNVNSKIISESTLNSCQGGTIQIAESIPLGLDISTNLSTHDAWMDLITNAQESIDLGFFYFTLLGGSDLDPVYGGQLGIDIFNAIVEAHSRGINVRIVQNEPSESFPDTETQTLAKLGIQVRSIDWVSLVGSGVLHTKLIIIDESSAYVGSANADWSSLAQVKELGIVLKNCPTMVADTEIAFQQYWNAADFTSLPINDWGSNYQALFNNTNMASLSLNNNNNNNNKNKNNDNDGSGTNQMYEMFLAVSPPQFQSTYRTGDIDALMDAINNADQSICITVMDYTPTTLYNDPNTYWPLIDNALRAAAFNRNVQVRMLISHWNYTSPIIPQWLHSLNQVDNIQVRWFVVPDFSTNPQIPYTRVNHAKFMVTEKQSYVGTSNWSQDYFTVTGGLSYNVFNNDFTNQLQSIFNRDWNSPYTQPIQNF</sequence>
<evidence type="ECO:0000250" key="1"/>
<evidence type="ECO:0000255" key="2"/>
<evidence type="ECO:0000255" key="3">
    <source>
        <dbReference type="PROSITE-ProRule" id="PRU00153"/>
    </source>
</evidence>
<evidence type="ECO:0000269" key="4">
    <source>
    </source>
</evidence>
<evidence type="ECO:0000305" key="5"/>
<reference key="1">
    <citation type="journal article" date="2005" name="Nature">
        <title>The genome of the social amoeba Dictyostelium discoideum.</title>
        <authorList>
            <person name="Eichinger L."/>
            <person name="Pachebat J.A."/>
            <person name="Gloeckner G."/>
            <person name="Rajandream M.A."/>
            <person name="Sucgang R."/>
            <person name="Berriman M."/>
            <person name="Song J."/>
            <person name="Olsen R."/>
            <person name="Szafranski K."/>
            <person name="Xu Q."/>
            <person name="Tunggal B."/>
            <person name="Kummerfeld S."/>
            <person name="Madera M."/>
            <person name="Konfortov B.A."/>
            <person name="Rivero F."/>
            <person name="Bankier A.T."/>
            <person name="Lehmann R."/>
            <person name="Hamlin N."/>
            <person name="Davies R."/>
            <person name="Gaudet P."/>
            <person name="Fey P."/>
            <person name="Pilcher K."/>
            <person name="Chen G."/>
            <person name="Saunders D."/>
            <person name="Sodergren E.J."/>
            <person name="Davis P."/>
            <person name="Kerhornou A."/>
            <person name="Nie X."/>
            <person name="Hall N."/>
            <person name="Anjard C."/>
            <person name="Hemphill L."/>
            <person name="Bason N."/>
            <person name="Farbrother P."/>
            <person name="Desany B."/>
            <person name="Just E."/>
            <person name="Morio T."/>
            <person name="Rost R."/>
            <person name="Churcher C.M."/>
            <person name="Cooper J."/>
            <person name="Haydock S."/>
            <person name="van Driessche N."/>
            <person name="Cronin A."/>
            <person name="Goodhead I."/>
            <person name="Muzny D.M."/>
            <person name="Mourier T."/>
            <person name="Pain A."/>
            <person name="Lu M."/>
            <person name="Harper D."/>
            <person name="Lindsay R."/>
            <person name="Hauser H."/>
            <person name="James K.D."/>
            <person name="Quiles M."/>
            <person name="Madan Babu M."/>
            <person name="Saito T."/>
            <person name="Buchrieser C."/>
            <person name="Wardroper A."/>
            <person name="Felder M."/>
            <person name="Thangavelu M."/>
            <person name="Johnson D."/>
            <person name="Knights A."/>
            <person name="Loulseged H."/>
            <person name="Mungall K.L."/>
            <person name="Oliver K."/>
            <person name="Price C."/>
            <person name="Quail M.A."/>
            <person name="Urushihara H."/>
            <person name="Hernandez J."/>
            <person name="Rabbinowitsch E."/>
            <person name="Steffen D."/>
            <person name="Sanders M."/>
            <person name="Ma J."/>
            <person name="Kohara Y."/>
            <person name="Sharp S."/>
            <person name="Simmonds M.N."/>
            <person name="Spiegler S."/>
            <person name="Tivey A."/>
            <person name="Sugano S."/>
            <person name="White B."/>
            <person name="Walker D."/>
            <person name="Woodward J.R."/>
            <person name="Winckler T."/>
            <person name="Tanaka Y."/>
            <person name="Shaulsky G."/>
            <person name="Schleicher M."/>
            <person name="Weinstock G.M."/>
            <person name="Rosenthal A."/>
            <person name="Cox E.C."/>
            <person name="Chisholm R.L."/>
            <person name="Gibbs R.A."/>
            <person name="Loomis W.F."/>
            <person name="Platzer M."/>
            <person name="Kay R.R."/>
            <person name="Williams J.G."/>
            <person name="Dear P.H."/>
            <person name="Noegel A.A."/>
            <person name="Barrell B.G."/>
            <person name="Kuspa A."/>
        </authorList>
    </citation>
    <scope>NUCLEOTIDE SEQUENCE [LARGE SCALE GENOMIC DNA]</scope>
    <source>
        <strain>AX4</strain>
    </source>
</reference>
<reference key="2">
    <citation type="journal article" date="1989" name="J. Mol. Biol.">
        <title>Organization of a gene family developmentally regulated during Dictyostelium discoideum spore germination.</title>
        <authorList>
            <person name="Giorda R."/>
            <person name="Ohmachi T."/>
            <person name="Ennis H.L."/>
        </authorList>
    </citation>
    <scope>NUCLEOTIDE SEQUENCE [MRNA] OF 1-429</scope>
    <scope>DEVELOPMENTAL STAGE</scope>
    <source>
        <strain>AX3 / DH1</strain>
    </source>
</reference>
<organism>
    <name type="scientific">Dictyostelium discoideum</name>
    <name type="common">Social amoeba</name>
    <dbReference type="NCBI Taxonomy" id="44689"/>
    <lineage>
        <taxon>Eukaryota</taxon>
        <taxon>Amoebozoa</taxon>
        <taxon>Evosea</taxon>
        <taxon>Eumycetozoa</taxon>
        <taxon>Dictyostelia</taxon>
        <taxon>Dictyosteliales</taxon>
        <taxon>Dictyosteliaceae</taxon>
        <taxon>Dictyostelium</taxon>
    </lineage>
</organism>
<comment type="function">
    <text evidence="1">Hydrolyzes membrane phospholipids, such as PtdCho (phosphatidylcholine), producing the free headgroup and PtdOH (phosphatidic acid; signaling molecule on its own).</text>
</comment>
<comment type="catalytic activity">
    <reaction>
        <text>a 1,2-diacyl-sn-glycero-3-phosphocholine + H2O = a 1,2-diacyl-sn-glycero-3-phosphate + choline + H(+)</text>
        <dbReference type="Rhea" id="RHEA:14445"/>
        <dbReference type="ChEBI" id="CHEBI:15354"/>
        <dbReference type="ChEBI" id="CHEBI:15377"/>
        <dbReference type="ChEBI" id="CHEBI:15378"/>
        <dbReference type="ChEBI" id="CHEBI:57643"/>
        <dbReference type="ChEBI" id="CHEBI:58608"/>
        <dbReference type="EC" id="3.1.4.4"/>
    </reaction>
</comment>
<comment type="activity regulation">
    <text>Inhibited by butan-1-ol.</text>
</comment>
<comment type="developmental stage">
    <text evidence="4">Expression is observed in spores, increases about two- to three-fold at 0.5 hour to 1 hour during spore germination, and then rapidly decreases. The mRNA is not detectable in vegetative cells or in early multicellular development on filters, but is present late during development, approximately at the time of sporulation.</text>
</comment>
<comment type="similarity">
    <text evidence="5">Belongs to the phospholipase D family.</text>
</comment>
<comment type="sequence caution" evidence="5">
    <conflict type="erroneous gene model prediction">
        <sequence resource="EMBL-CDS" id="AAA67429"/>
    </conflict>
</comment>
<feature type="signal peptide" evidence="2">
    <location>
        <begin position="1"/>
        <end position="19"/>
    </location>
</feature>
<feature type="chain" id="PRO_0000367473" description="Phospholipase D Y">
    <location>
        <begin position="20"/>
        <end position="438"/>
    </location>
</feature>
<feature type="domain" description="PLD phosphodiesterase 1" evidence="3">
    <location>
        <begin position="145"/>
        <end position="172"/>
    </location>
</feature>
<feature type="domain" description="PLD phosphodiesterase 2" evidence="3">
    <location>
        <begin position="373"/>
        <end position="399"/>
    </location>
</feature>
<feature type="active site" evidence="3">
    <location>
        <position position="150"/>
    </location>
</feature>
<feature type="active site" evidence="3">
    <location>
        <position position="152"/>
    </location>
</feature>
<feature type="active site" evidence="3">
    <location>
        <position position="157"/>
    </location>
</feature>
<feature type="glycosylation site" description="N-linked (GlcNAc...) asparagine" evidence="2">
    <location>
        <position position="50"/>
    </location>
</feature>
<feature type="glycosylation site" description="N-linked (GlcNAc...) asparagine" evidence="2">
    <location>
        <position position="223"/>
    </location>
</feature>
<feature type="glycosylation site" description="N-linked (GlcNAc...) asparagine" evidence="2">
    <location>
        <position position="336"/>
    </location>
</feature>
<feature type="glycosylation site" description="N-linked (GlcNAc...) asparagine" evidence="2">
    <location>
        <position position="394"/>
    </location>
</feature>
<protein>
    <recommendedName>
        <fullName>Phospholipase D Y</fullName>
        <ecNumber>3.1.4.4</ecNumber>
    </recommendedName>
    <alternativeName>
        <fullName>Phosphatase D3</fullName>
        <shortName>PLD 3</shortName>
    </alternativeName>
</protein>
<dbReference type="EC" id="3.1.4.4"/>
<dbReference type="EMBL" id="AAFI02000103">
    <property type="protein sequence ID" value="EAL63633.1"/>
    <property type="molecule type" value="Genomic_DNA"/>
</dbReference>
<dbReference type="EMBL" id="M19469">
    <property type="protein sequence ID" value="AAA67429.1"/>
    <property type="status" value="ALT_SEQ"/>
    <property type="molecule type" value="Genomic_DNA"/>
</dbReference>
<dbReference type="RefSeq" id="XP_637114.1">
    <property type="nucleotide sequence ID" value="XM_632022.1"/>
</dbReference>
<dbReference type="SMR" id="Q54K50"/>
<dbReference type="FunCoup" id="Q54K50">
    <property type="interactions" value="16"/>
</dbReference>
<dbReference type="STRING" id="44689.Q54K50"/>
<dbReference type="GlyCosmos" id="Q54K50">
    <property type="glycosylation" value="4 sites, No reported glycans"/>
</dbReference>
<dbReference type="GlyGen" id="Q54K50">
    <property type="glycosylation" value="4 sites"/>
</dbReference>
<dbReference type="PaxDb" id="44689-DDB0220113"/>
<dbReference type="EnsemblProtists" id="EAL63633">
    <property type="protein sequence ID" value="EAL63633"/>
    <property type="gene ID" value="DDB_G0287649"/>
</dbReference>
<dbReference type="GeneID" id="8626209"/>
<dbReference type="KEGG" id="ddi:DDB_G0287649"/>
<dbReference type="dictyBase" id="DDB_G0287649">
    <property type="gene designation" value="pldY"/>
</dbReference>
<dbReference type="VEuPathDB" id="AmoebaDB:DDB_G0287649"/>
<dbReference type="eggNOG" id="KOG3603">
    <property type="taxonomic scope" value="Eukaryota"/>
</dbReference>
<dbReference type="HOGENOM" id="CLU_027021_0_0_1"/>
<dbReference type="InParanoid" id="Q54K50"/>
<dbReference type="PhylomeDB" id="Q54K50"/>
<dbReference type="Reactome" id="R-DDI-1855204">
    <property type="pathway name" value="Synthesis of IP3 and IP4 in the cytosol"/>
</dbReference>
<dbReference type="Reactome" id="R-DDI-2029485">
    <property type="pathway name" value="Role of phospholipids in phagocytosis"/>
</dbReference>
<dbReference type="PRO" id="PR:Q54K50"/>
<dbReference type="Proteomes" id="UP000002195">
    <property type="component" value="Chromosome 5"/>
</dbReference>
<dbReference type="GO" id="GO:0004630">
    <property type="term" value="F:phospholipase D activity"/>
    <property type="evidence" value="ECO:0007669"/>
    <property type="project" value="UniProtKB-EC"/>
</dbReference>
<dbReference type="GO" id="GO:0016042">
    <property type="term" value="P:lipid catabolic process"/>
    <property type="evidence" value="ECO:0007669"/>
    <property type="project" value="UniProtKB-KW"/>
</dbReference>
<dbReference type="GO" id="GO:0044351">
    <property type="term" value="P:macropinocytosis"/>
    <property type="evidence" value="ECO:0000315"/>
    <property type="project" value="dictyBase"/>
</dbReference>
<dbReference type="CDD" id="cd09106">
    <property type="entry name" value="PLDc_vPLD3_4_5_like_1"/>
    <property type="match status" value="1"/>
</dbReference>
<dbReference type="CDD" id="cd09107">
    <property type="entry name" value="PLDc_vPLD3_4_5_like_2"/>
    <property type="match status" value="1"/>
</dbReference>
<dbReference type="Gene3D" id="3.30.870.10">
    <property type="entry name" value="Endonuclease Chain A"/>
    <property type="match status" value="2"/>
</dbReference>
<dbReference type="InterPro" id="IPR050874">
    <property type="entry name" value="Diverse_PLD-related"/>
</dbReference>
<dbReference type="InterPro" id="IPR032803">
    <property type="entry name" value="PLDc_3"/>
</dbReference>
<dbReference type="InterPro" id="IPR001736">
    <property type="entry name" value="PLipase_D/transphosphatidylase"/>
</dbReference>
<dbReference type="PANTHER" id="PTHR10185:SF17">
    <property type="entry name" value="GM01519P-RELATED"/>
    <property type="match status" value="1"/>
</dbReference>
<dbReference type="PANTHER" id="PTHR10185">
    <property type="entry name" value="PHOSPHOLIPASE D - RELATED"/>
    <property type="match status" value="1"/>
</dbReference>
<dbReference type="Pfam" id="PF00614">
    <property type="entry name" value="PLDc"/>
    <property type="match status" value="1"/>
</dbReference>
<dbReference type="Pfam" id="PF13918">
    <property type="entry name" value="PLDc_3"/>
    <property type="match status" value="1"/>
</dbReference>
<dbReference type="SMART" id="SM00155">
    <property type="entry name" value="PLDc"/>
    <property type="match status" value="2"/>
</dbReference>
<dbReference type="SUPFAM" id="SSF56024">
    <property type="entry name" value="Phospholipase D/nuclease"/>
    <property type="match status" value="2"/>
</dbReference>
<dbReference type="PROSITE" id="PS50035">
    <property type="entry name" value="PLD"/>
    <property type="match status" value="2"/>
</dbReference>
<gene>
    <name type="primary">pldY</name>
    <name type="synonym">pld3</name>
    <name type="ORF">DDB_G0287649</name>
</gene>
<accession>Q54K50</accession>
<accession>Q23849</accession>